<name>VG05_SHV21</name>
<feature type="chain" id="PRO_0000116340" description="Uncharacterized gene 5 protein">
    <location>
        <begin position="1"/>
        <end position="96"/>
    </location>
</feature>
<organism>
    <name type="scientific">Saimiriine herpesvirus 2 (strain 11)</name>
    <name type="common">SaHV-2</name>
    <name type="synonym">Herpesvirus saimiri</name>
    <dbReference type="NCBI Taxonomy" id="10383"/>
    <lineage>
        <taxon>Viruses</taxon>
        <taxon>Duplodnaviria</taxon>
        <taxon>Heunggongvirae</taxon>
        <taxon>Peploviricota</taxon>
        <taxon>Herviviricetes</taxon>
        <taxon>Herpesvirales</taxon>
        <taxon>Orthoherpesviridae</taxon>
        <taxon>Gammaherpesvirinae</taxon>
        <taxon>Rhadinovirus</taxon>
        <taxon>Rhadinovirus saimiriinegamma2</taxon>
        <taxon>Saimiriine herpesvirus 2</taxon>
    </lineage>
</organism>
<keyword id="KW-1185">Reference proteome</keyword>
<accession>P24912</accession>
<dbReference type="EMBL" id="X64346">
    <property type="protein sequence ID" value="CAA45628.1"/>
    <property type="molecule type" value="Genomic_DNA"/>
</dbReference>
<dbReference type="EMBL" id="M31122">
    <property type="protein sequence ID" value="AAA46161.1"/>
    <property type="molecule type" value="Genomic_DNA"/>
</dbReference>
<dbReference type="RefSeq" id="NP_040207.1">
    <property type="nucleotide sequence ID" value="NC_001350.1"/>
</dbReference>
<dbReference type="KEGG" id="vg:1682492"/>
<dbReference type="Proteomes" id="UP000000587">
    <property type="component" value="Segment"/>
</dbReference>
<organismHost>
    <name type="scientific">Saimiri sciureus</name>
    <name type="common">Common squirrel monkey</name>
    <dbReference type="NCBI Taxonomy" id="9521"/>
</organismHost>
<proteinExistence type="predicted"/>
<gene>
    <name type="primary">5</name>
    <name type="synonym">KFLF1</name>
</gene>
<reference key="1">
    <citation type="journal article" date="1990" name="Virology">
        <title>Structural organization of the conserved gene block of Herpesvirus saimiri coding for DNA polymerase, glycoprotein B, and major DNA binding protein.</title>
        <authorList>
            <person name="Albrecht J.-C."/>
            <person name="Fleckenstein B."/>
        </authorList>
    </citation>
    <scope>NUCLEOTIDE SEQUENCE [GENOMIC DNA]</scope>
</reference>
<reference key="2">
    <citation type="journal article" date="1992" name="J. Virol.">
        <title>Primary structure of the herpesvirus saimiri genome.</title>
        <authorList>
            <person name="Albrecht J.-C."/>
            <person name="Nicholas J."/>
            <person name="Biller D."/>
            <person name="Cameron K.R."/>
            <person name="Biesinger B."/>
            <person name="Newman C."/>
            <person name="Wittmann S."/>
            <person name="Craxton M.A."/>
            <person name="Coleman H."/>
            <person name="Fleckenstein B."/>
            <person name="Honess R.W."/>
        </authorList>
    </citation>
    <scope>NUCLEOTIDE SEQUENCE [LARGE SCALE GENOMIC DNA]</scope>
</reference>
<sequence length="96" mass="11111">MTEIFLFHLKAKHKLLQAEENNYSNDPVYEEIQPLSEECNRNTTSLNDSIYDDVCYPEDDMYDDGCGAYTRLDASRVDYGQLRTCNGDSHIYEEIG</sequence>
<protein>
    <recommendedName>
        <fullName>Uncharacterized gene 5 protein</fullName>
    </recommendedName>
</protein>